<evidence type="ECO:0000250" key="1">
    <source>
        <dbReference type="UniProtKB" id="P08956"/>
    </source>
</evidence>
<evidence type="ECO:0000255" key="2">
    <source>
        <dbReference type="PROSITE-ProRule" id="PRU00541"/>
    </source>
</evidence>
<evidence type="ECO:0000255" key="3">
    <source>
        <dbReference type="PROSITE-ProRule" id="PRU00542"/>
    </source>
</evidence>
<evidence type="ECO:0000256" key="4">
    <source>
        <dbReference type="SAM" id="MobiDB-lite"/>
    </source>
</evidence>
<evidence type="ECO:0000269" key="5">
    <source>
    </source>
</evidence>
<evidence type="ECO:0000303" key="6">
    <source>
    </source>
</evidence>
<evidence type="ECO:0000303" key="7">
    <source>
    </source>
</evidence>
<evidence type="ECO:0000305" key="8"/>
<proteinExistence type="evidence at protein level"/>
<protein>
    <recommendedName>
        <fullName evidence="6">Type I restriction enzyme EcoAI endonuclease subunit</fullName>
        <shortName evidence="6">EcoAI</shortName>
        <shortName>R protein</shortName>
        <ecNumber evidence="1">3.1.21.3</ecNumber>
    </recommendedName>
</protein>
<comment type="function">
    <text evidence="5 6">The subtype B restriction (R) subunit of a type I restriction enzyme that recognizes 5'-GAGN(7)GTCA-3' and cleaves a random distance away. Subunit R is required for both nuclease and ATPase activities, but not for modification. After locating a non-methylated recognition site, the enzyme complex serves as a molecular motor that translocates DNA in an ATP-dependent manner until a collision occurs that triggers cleavage.</text>
</comment>
<comment type="catalytic activity">
    <reaction evidence="1">
        <text>Endonucleolytic cleavage of DNA to give random double-stranded fragments with terminal 5'-phosphates, ATP is simultaneously hydrolyzed.</text>
        <dbReference type="EC" id="3.1.21.3"/>
    </reaction>
</comment>
<comment type="subunit">
    <text evidence="1 5">The type I restriction/modification system is composed of three polypeptides R, M and S (PubMed:6325176). The restriction enzyme has stoichiometry R(2)M(2)S(1) while the methyltransferase is M(2)S(1) (By similarity).</text>
</comment>
<comment type="miscellaneous">
    <text evidence="1">Type I restriction and modification enzymes are complex, multifunctional systems which require ATP, S-adenosyl methionine and magnesium as cofactors and, in addition to their endonucleolytic and methylase activities, are potent DNA-dependent ATPases.</text>
</comment>
<comment type="similarity">
    <text evidence="8">Belongs to the HsdR family.</text>
</comment>
<name>T1RA_ECOLX</name>
<accession>Q07736</accession>
<feature type="chain" id="PRO_0000077257" description="Type I restriction enzyme EcoAI endonuclease subunit">
    <location>
        <begin position="1"/>
        <end position="810"/>
    </location>
</feature>
<feature type="domain" description="Helicase ATP-binding" evidence="2">
    <location>
        <begin position="183"/>
        <end position="343"/>
    </location>
</feature>
<feature type="domain" description="Helicase C-terminal" evidence="3">
    <location>
        <begin position="412"/>
        <end position="575"/>
    </location>
</feature>
<feature type="region of interest" description="Disordered" evidence="4">
    <location>
        <begin position="578"/>
        <end position="608"/>
    </location>
</feature>
<feature type="compositionally biased region" description="Acidic residues" evidence="4">
    <location>
        <begin position="578"/>
        <end position="588"/>
    </location>
</feature>
<feature type="binding site" evidence="2">
    <location>
        <begin position="197"/>
        <end position="203"/>
    </location>
    <ligand>
        <name>ATP</name>
        <dbReference type="ChEBI" id="CHEBI:30616"/>
    </ligand>
</feature>
<organism>
    <name type="scientific">Escherichia coli</name>
    <dbReference type="NCBI Taxonomy" id="562"/>
    <lineage>
        <taxon>Bacteria</taxon>
        <taxon>Pseudomonadati</taxon>
        <taxon>Pseudomonadota</taxon>
        <taxon>Gammaproteobacteria</taxon>
        <taxon>Enterobacterales</taxon>
        <taxon>Enterobacteriaceae</taxon>
        <taxon>Escherichia</taxon>
    </lineage>
</organism>
<sequence>MAELNLSNLTEADIITKCVMPAILNAGWDNTTQIRQEVKLRDGKVIVRGKVAARRTVKSADIVLYHKPGIPLAVIEAKANKHEIGKGMQQGIEYARLLDVPFVFATNGDGFIFRDATAAEGECLEKQITLDDFPSPAELWQKFCLWKGYTQAQLPVITQDYYDDGSGKSPRYYQLQAINKTIEAVSNGQNRVLLVMATGTGKTYTAFQIIWRLWKSKNKKRILFLADRNILVDQTKNNDFQPFGTAMTKVSGRTIDPAYEIHLALYQAITGPEEDQKAFKQVAPDFFDLIVIDECHRGSASEDSAWREILDYFSSATQIGLTATPKETHEVSSTDYFGDPVYVYSLKEGIEDGFLAPYKVVRVDIDVDLQGWRPTKGQTDLNGEVIDDRIYNQKDFDRTMVIDERTELVARTITDYLKRTNPMDKTIVFCNDIDHAERMRRALVNLNPEQVKKNDKYVMKITGDDEIGKAQLDNFINPKKPYPVIATTSELMTTGVDAKTCKLVVLDQNIQSMTKFKQIIGRGTRIDERYGKLWFTILDFKKATELFADERFDGIPEKVMDTTPEDIADPESDFEEKLEEISEHDEEQVTGVDEPPAPPYQVTDTDDVGPLPEEDEKKIRKFHVNGVAVGVIAQRVQYYDADGKLVTESFKDYTRKTLLKEYASLDDFTRKWQDADRKEAIIHELEQQGIIWEVLAEEVGKDLDPFDMLCHVVYGQPPLTRKERAENVRKRNYFTKYSEAAQAVLDNLLDKYADAGVQEIESIQVLKLKPFDSMGTLPEIIKTGFGDRNGYNQALSELENEIYQLPPRSA</sequence>
<dbReference type="EC" id="3.1.21.3" evidence="1"/>
<dbReference type="EMBL" id="L18758">
    <property type="protein sequence ID" value="AAA23983.1"/>
    <property type="molecule type" value="Genomic_DNA"/>
</dbReference>
<dbReference type="PIR" id="I41291">
    <property type="entry name" value="I41291"/>
</dbReference>
<dbReference type="RefSeq" id="WP_000819019.1">
    <property type="nucleotide sequence ID" value="NZ_WTVB01000071.1"/>
</dbReference>
<dbReference type="SMR" id="Q07736"/>
<dbReference type="REBASE" id="233079">
    <property type="entry name" value="Sen4024ORF3807P"/>
</dbReference>
<dbReference type="REBASE" id="246643">
    <property type="entry name" value="Mmy2708ORF27P"/>
</dbReference>
<dbReference type="REBASE" id="256764">
    <property type="entry name" value="Ssp9304ORF612P"/>
</dbReference>
<dbReference type="REBASE" id="969">
    <property type="entry name" value="EcoAI"/>
</dbReference>
<dbReference type="OMA" id="FSDPEWD"/>
<dbReference type="BRENDA" id="3.1.21.3">
    <property type="organism ID" value="2026"/>
</dbReference>
<dbReference type="PRO" id="PR:Q07736"/>
<dbReference type="GO" id="GO:0005829">
    <property type="term" value="C:cytosol"/>
    <property type="evidence" value="ECO:0007669"/>
    <property type="project" value="TreeGrafter"/>
</dbReference>
<dbReference type="GO" id="GO:0005524">
    <property type="term" value="F:ATP binding"/>
    <property type="evidence" value="ECO:0007669"/>
    <property type="project" value="UniProtKB-KW"/>
</dbReference>
<dbReference type="GO" id="GO:0003677">
    <property type="term" value="F:DNA binding"/>
    <property type="evidence" value="ECO:0007669"/>
    <property type="project" value="UniProtKB-KW"/>
</dbReference>
<dbReference type="GO" id="GO:0009035">
    <property type="term" value="F:type I site-specific deoxyribonuclease activity"/>
    <property type="evidence" value="ECO:0007669"/>
    <property type="project" value="UniProtKB-EC"/>
</dbReference>
<dbReference type="GO" id="GO:0009307">
    <property type="term" value="P:DNA restriction-modification system"/>
    <property type="evidence" value="ECO:0007669"/>
    <property type="project" value="UniProtKB-KW"/>
</dbReference>
<dbReference type="CDD" id="cd18032">
    <property type="entry name" value="DEXHc_RE_I_III_res"/>
    <property type="match status" value="1"/>
</dbReference>
<dbReference type="CDD" id="cd18799">
    <property type="entry name" value="SF2_C_EcoAI-like"/>
    <property type="match status" value="1"/>
</dbReference>
<dbReference type="Gene3D" id="3.90.1570.30">
    <property type="match status" value="1"/>
</dbReference>
<dbReference type="Gene3D" id="3.40.50.300">
    <property type="entry name" value="P-loop containing nucleotide triphosphate hydrolases"/>
    <property type="match status" value="2"/>
</dbReference>
<dbReference type="InterPro" id="IPR013670">
    <property type="entry name" value="EcoEI_R_C_dom"/>
</dbReference>
<dbReference type="InterPro" id="IPR006935">
    <property type="entry name" value="Helicase/UvrB_N"/>
</dbReference>
<dbReference type="InterPro" id="IPR014001">
    <property type="entry name" value="Helicase_ATP-bd"/>
</dbReference>
<dbReference type="InterPro" id="IPR001650">
    <property type="entry name" value="Helicase_C-like"/>
</dbReference>
<dbReference type="InterPro" id="IPR050742">
    <property type="entry name" value="Helicase_Restrict-Modif_Enz"/>
</dbReference>
<dbReference type="InterPro" id="IPR027417">
    <property type="entry name" value="P-loop_NTPase"/>
</dbReference>
<dbReference type="InterPro" id="IPR007409">
    <property type="entry name" value="Restrct_endonuc_type1_HsdR_N"/>
</dbReference>
<dbReference type="NCBIfam" id="NF046051">
    <property type="entry name" value="restrict_EcoAI"/>
    <property type="match status" value="1"/>
</dbReference>
<dbReference type="PANTHER" id="PTHR47396:SF1">
    <property type="entry name" value="ATP-DEPENDENT HELICASE IRC3-RELATED"/>
    <property type="match status" value="1"/>
</dbReference>
<dbReference type="PANTHER" id="PTHR47396">
    <property type="entry name" value="TYPE I RESTRICTION ENZYME ECOKI R PROTEIN"/>
    <property type="match status" value="1"/>
</dbReference>
<dbReference type="Pfam" id="PF08463">
    <property type="entry name" value="EcoEI_R_C"/>
    <property type="match status" value="1"/>
</dbReference>
<dbReference type="Pfam" id="PF00271">
    <property type="entry name" value="Helicase_C"/>
    <property type="match status" value="1"/>
</dbReference>
<dbReference type="Pfam" id="PF04313">
    <property type="entry name" value="HSDR_N"/>
    <property type="match status" value="1"/>
</dbReference>
<dbReference type="Pfam" id="PF04851">
    <property type="entry name" value="ResIII"/>
    <property type="match status" value="1"/>
</dbReference>
<dbReference type="SMART" id="SM00487">
    <property type="entry name" value="DEXDc"/>
    <property type="match status" value="1"/>
</dbReference>
<dbReference type="SUPFAM" id="SSF52540">
    <property type="entry name" value="P-loop containing nucleoside triphosphate hydrolases"/>
    <property type="match status" value="2"/>
</dbReference>
<dbReference type="PROSITE" id="PS51192">
    <property type="entry name" value="HELICASE_ATP_BIND_1"/>
    <property type="match status" value="1"/>
</dbReference>
<dbReference type="PROSITE" id="PS51194">
    <property type="entry name" value="HELICASE_CTER"/>
    <property type="match status" value="1"/>
</dbReference>
<keyword id="KW-0067">ATP-binding</keyword>
<keyword id="KW-0238">DNA-binding</keyword>
<keyword id="KW-0255">Endonuclease</keyword>
<keyword id="KW-0378">Hydrolase</keyword>
<keyword id="KW-0540">Nuclease</keyword>
<keyword id="KW-0547">Nucleotide-binding</keyword>
<keyword id="KW-0680">Restriction system</keyword>
<gene>
    <name evidence="7" type="primary">hsdR</name>
    <name type="synonym">hsr</name>
</gene>
<reference key="1">
    <citation type="journal article" date="1993" name="Mol. Microbiol.">
        <title>Conservation of motifs within the unusually variable polypeptide sequences of type I restriction and modification enzymes.</title>
        <authorList>
            <person name="Murray N.E."/>
            <person name="Daniel A.S."/>
            <person name="Cowan G.M."/>
            <person name="Sharp P.M."/>
        </authorList>
    </citation>
    <scope>NUCLEOTIDE SEQUENCE [GENOMIC DNA]</scope>
    <source>
        <strain>15T</strain>
    </source>
</reference>
<reference key="2">
    <citation type="journal article" date="1984" name="EMBO J.">
        <title>The EcoA restriction and modification system of Escherichia coli 15T-: enzyme structure and DNA recognition sequence.</title>
        <authorList>
            <person name="Suri B."/>
            <person name="Shepherd J.C."/>
            <person name="Bickle T.A."/>
        </authorList>
    </citation>
    <scope>FUNCTION</scope>
    <scope>RECOGNITION SEQUENCE</scope>
    <scope>SUBUNIT</scope>
    <source>
        <strain>15T</strain>
    </source>
</reference>
<reference key="3">
    <citation type="journal article" date="2003" name="Nucleic Acids Res.">
        <title>A nomenclature for restriction enzymes, DNA methyltransferases, homing endonucleases and their genes.</title>
        <authorList>
            <person name="Roberts R.J."/>
            <person name="Belfort M."/>
            <person name="Bestor T."/>
            <person name="Bhagwat A.S."/>
            <person name="Bickle T.A."/>
            <person name="Bitinaite J."/>
            <person name="Blumenthal R.M."/>
            <person name="Degtyarev S.K."/>
            <person name="Dryden D.T."/>
            <person name="Dybvig K."/>
            <person name="Firman K."/>
            <person name="Gromova E.S."/>
            <person name="Gumport R.I."/>
            <person name="Halford S.E."/>
            <person name="Hattman S."/>
            <person name="Heitman J."/>
            <person name="Hornby D.P."/>
            <person name="Janulaitis A."/>
            <person name="Jeltsch A."/>
            <person name="Josephsen J."/>
            <person name="Kiss A."/>
            <person name="Klaenhammer T.R."/>
            <person name="Kobayashi I."/>
            <person name="Kong H."/>
            <person name="Krueger D.H."/>
            <person name="Lacks S."/>
            <person name="Marinus M.G."/>
            <person name="Miyahara M."/>
            <person name="Morgan R.D."/>
            <person name="Murray N.E."/>
            <person name="Nagaraja V."/>
            <person name="Piekarowicz A."/>
            <person name="Pingoud A."/>
            <person name="Raleigh E."/>
            <person name="Rao D.N."/>
            <person name="Reich N."/>
            <person name="Repin V.E."/>
            <person name="Selker E.U."/>
            <person name="Shaw P.C."/>
            <person name="Stein D.C."/>
            <person name="Stoddard B.L."/>
            <person name="Szybalski W."/>
            <person name="Trautner T.A."/>
            <person name="Van Etten J.L."/>
            <person name="Vitor J.M."/>
            <person name="Wilson G.G."/>
            <person name="Xu S.Y."/>
        </authorList>
    </citation>
    <scope>NOMENCLATURE</scope>
    <scope>SUBTYPE</scope>
</reference>